<protein>
    <recommendedName>
        <fullName evidence="1">Large ribosomal subunit protein bL33</fullName>
    </recommendedName>
    <alternativeName>
        <fullName evidence="3">50S ribosomal protein L33</fullName>
    </alternativeName>
</protein>
<dbReference type="EMBL" id="AL646052">
    <property type="protein sequence ID" value="CAD16153.1"/>
    <property type="molecule type" value="Genomic_DNA"/>
</dbReference>
<dbReference type="RefSeq" id="WP_003262397.1">
    <property type="nucleotide sequence ID" value="NC_003295.1"/>
</dbReference>
<dbReference type="SMR" id="Q8XWM8"/>
<dbReference type="STRING" id="267608.RSc2446"/>
<dbReference type="EnsemblBacteria" id="CAD16153">
    <property type="protein sequence ID" value="CAD16153"/>
    <property type="gene ID" value="RSc2446"/>
</dbReference>
<dbReference type="GeneID" id="97320381"/>
<dbReference type="KEGG" id="rso:RSc2446"/>
<dbReference type="eggNOG" id="COG0267">
    <property type="taxonomic scope" value="Bacteria"/>
</dbReference>
<dbReference type="HOGENOM" id="CLU_190949_1_1_4"/>
<dbReference type="Proteomes" id="UP000001436">
    <property type="component" value="Chromosome"/>
</dbReference>
<dbReference type="GO" id="GO:0022625">
    <property type="term" value="C:cytosolic large ribosomal subunit"/>
    <property type="evidence" value="ECO:0007669"/>
    <property type="project" value="TreeGrafter"/>
</dbReference>
<dbReference type="GO" id="GO:0003735">
    <property type="term" value="F:structural constituent of ribosome"/>
    <property type="evidence" value="ECO:0007669"/>
    <property type="project" value="InterPro"/>
</dbReference>
<dbReference type="GO" id="GO:0006412">
    <property type="term" value="P:translation"/>
    <property type="evidence" value="ECO:0007669"/>
    <property type="project" value="UniProtKB-UniRule"/>
</dbReference>
<dbReference type="FunFam" id="2.20.28.120:FF:000001">
    <property type="entry name" value="50S ribosomal protein L33"/>
    <property type="match status" value="1"/>
</dbReference>
<dbReference type="Gene3D" id="2.20.28.120">
    <property type="entry name" value="Ribosomal protein L33"/>
    <property type="match status" value="1"/>
</dbReference>
<dbReference type="HAMAP" id="MF_00294">
    <property type="entry name" value="Ribosomal_bL33"/>
    <property type="match status" value="1"/>
</dbReference>
<dbReference type="InterPro" id="IPR001705">
    <property type="entry name" value="Ribosomal_bL33"/>
</dbReference>
<dbReference type="InterPro" id="IPR018264">
    <property type="entry name" value="Ribosomal_bL33_CS"/>
</dbReference>
<dbReference type="InterPro" id="IPR038584">
    <property type="entry name" value="Ribosomal_bL33_sf"/>
</dbReference>
<dbReference type="InterPro" id="IPR011332">
    <property type="entry name" value="Ribosomal_zn-bd"/>
</dbReference>
<dbReference type="NCBIfam" id="NF001860">
    <property type="entry name" value="PRK00595.1"/>
    <property type="match status" value="1"/>
</dbReference>
<dbReference type="NCBIfam" id="TIGR01023">
    <property type="entry name" value="rpmG_bact"/>
    <property type="match status" value="1"/>
</dbReference>
<dbReference type="PANTHER" id="PTHR15238">
    <property type="entry name" value="54S RIBOSOMAL PROTEIN L39, MITOCHONDRIAL"/>
    <property type="match status" value="1"/>
</dbReference>
<dbReference type="PANTHER" id="PTHR15238:SF1">
    <property type="entry name" value="LARGE RIBOSOMAL SUBUNIT PROTEIN BL33M"/>
    <property type="match status" value="1"/>
</dbReference>
<dbReference type="Pfam" id="PF00471">
    <property type="entry name" value="Ribosomal_L33"/>
    <property type="match status" value="1"/>
</dbReference>
<dbReference type="SUPFAM" id="SSF57829">
    <property type="entry name" value="Zn-binding ribosomal proteins"/>
    <property type="match status" value="1"/>
</dbReference>
<dbReference type="PROSITE" id="PS00582">
    <property type="entry name" value="RIBOSOMAL_L33"/>
    <property type="match status" value="1"/>
</dbReference>
<keyword id="KW-1185">Reference proteome</keyword>
<keyword id="KW-0687">Ribonucleoprotein</keyword>
<keyword id="KW-0689">Ribosomal protein</keyword>
<accession>Q8XWM8</accession>
<reference key="1">
    <citation type="journal article" date="2002" name="Nature">
        <title>Genome sequence of the plant pathogen Ralstonia solanacearum.</title>
        <authorList>
            <person name="Salanoubat M."/>
            <person name="Genin S."/>
            <person name="Artiguenave F."/>
            <person name="Gouzy J."/>
            <person name="Mangenot S."/>
            <person name="Arlat M."/>
            <person name="Billault A."/>
            <person name="Brottier P."/>
            <person name="Camus J.-C."/>
            <person name="Cattolico L."/>
            <person name="Chandler M."/>
            <person name="Choisne N."/>
            <person name="Claudel-Renard C."/>
            <person name="Cunnac S."/>
            <person name="Demange N."/>
            <person name="Gaspin C."/>
            <person name="Lavie M."/>
            <person name="Moisan A."/>
            <person name="Robert C."/>
            <person name="Saurin W."/>
            <person name="Schiex T."/>
            <person name="Siguier P."/>
            <person name="Thebault P."/>
            <person name="Whalen M."/>
            <person name="Wincker P."/>
            <person name="Levy M."/>
            <person name="Weissenbach J."/>
            <person name="Boucher C.A."/>
        </authorList>
    </citation>
    <scope>NUCLEOTIDE SEQUENCE [LARGE SCALE GENOMIC DNA]</scope>
    <source>
        <strain>ATCC BAA-1114 / GMI1000</strain>
    </source>
</reference>
<proteinExistence type="inferred from homology"/>
<gene>
    <name evidence="1" type="primary">rpmG</name>
    <name type="ordered locus">RSc2446</name>
    <name type="ORF">RS01348</name>
</gene>
<sequence>MASKGGRDKIKLESTAGTGHFYTTTKNKRTKPEKMEIMKFDPVARKHVAYKETKIK</sequence>
<name>RL33_RALN1</name>
<evidence type="ECO:0000255" key="1">
    <source>
        <dbReference type="HAMAP-Rule" id="MF_00294"/>
    </source>
</evidence>
<evidence type="ECO:0000256" key="2">
    <source>
        <dbReference type="SAM" id="MobiDB-lite"/>
    </source>
</evidence>
<evidence type="ECO:0000305" key="3"/>
<feature type="chain" id="PRO_0000170202" description="Large ribosomal subunit protein bL33">
    <location>
        <begin position="1"/>
        <end position="56"/>
    </location>
</feature>
<feature type="region of interest" description="Disordered" evidence="2">
    <location>
        <begin position="1"/>
        <end position="30"/>
    </location>
</feature>
<feature type="compositionally biased region" description="Basic and acidic residues" evidence="2">
    <location>
        <begin position="1"/>
        <end position="12"/>
    </location>
</feature>
<feature type="compositionally biased region" description="Polar residues" evidence="2">
    <location>
        <begin position="15"/>
        <end position="25"/>
    </location>
</feature>
<organism>
    <name type="scientific">Ralstonia nicotianae (strain ATCC BAA-1114 / GMI1000)</name>
    <name type="common">Ralstonia solanacearum</name>
    <dbReference type="NCBI Taxonomy" id="267608"/>
    <lineage>
        <taxon>Bacteria</taxon>
        <taxon>Pseudomonadati</taxon>
        <taxon>Pseudomonadota</taxon>
        <taxon>Betaproteobacteria</taxon>
        <taxon>Burkholderiales</taxon>
        <taxon>Burkholderiaceae</taxon>
        <taxon>Ralstonia</taxon>
        <taxon>Ralstonia solanacearum species complex</taxon>
    </lineage>
</organism>
<comment type="similarity">
    <text evidence="1">Belongs to the bacterial ribosomal protein bL33 family.</text>
</comment>